<name>CH60_MYCXE</name>
<feature type="chain" id="PRO_0000063455" description="Chaperonin GroEL">
    <location>
        <begin position="1" status="less than"/>
        <end position="120" status="greater than"/>
    </location>
</feature>
<feature type="binding site" evidence="1">
    <location>
        <begin position="23"/>
        <end position="27"/>
    </location>
    <ligand>
        <name>ATP</name>
        <dbReference type="ChEBI" id="CHEBI:30616"/>
    </ligand>
</feature>
<feature type="non-terminal residue">
    <location>
        <position position="1"/>
    </location>
</feature>
<feature type="non-terminal residue">
    <location>
        <position position="120"/>
    </location>
</feature>
<proteinExistence type="inferred from homology"/>
<keyword id="KW-0067">ATP-binding</keyword>
<keyword id="KW-0143">Chaperone</keyword>
<keyword id="KW-0963">Cytoplasm</keyword>
<keyword id="KW-0413">Isomerase</keyword>
<keyword id="KW-0547">Nucleotide-binding</keyword>
<keyword id="KW-0346">Stress response</keyword>
<comment type="function">
    <text evidence="1">Together with its co-chaperonin GroES, plays an essential role in assisting protein folding. The GroEL-GroES system forms a nano-cage that allows encapsulation of the non-native substrate proteins and provides a physical environment optimized to promote and accelerate protein folding.</text>
</comment>
<comment type="catalytic activity">
    <reaction evidence="1">
        <text>ATP + H2O + a folded polypeptide = ADP + phosphate + an unfolded polypeptide.</text>
        <dbReference type="EC" id="5.6.1.7"/>
    </reaction>
</comment>
<comment type="subunit">
    <text evidence="1">Forms a cylinder of 14 subunits composed of two heptameric rings stacked back-to-back. Interacts with the co-chaperonin GroES.</text>
</comment>
<comment type="subcellular location">
    <subcellularLocation>
        <location evidence="1">Cytoplasm</location>
    </subcellularLocation>
</comment>
<comment type="similarity">
    <text evidence="1 2">Belongs to the chaperonin (HSP60) family.</text>
</comment>
<sequence>PYEKIGAELVKEVAKKTDDVAGDGTTTATVLAQALVKEGLRNVAAGANPLALKRGIEKAVEKVTETLLKTAKEVETKEQIAATAAISAGDQAIGDLIAEAMDKVGNEGVITVEESNTFGL</sequence>
<gene>
    <name evidence="1" type="primary">groEL</name>
    <name evidence="1" type="synonym">groL</name>
    <name type="synonym">mopA</name>
</gene>
<dbReference type="EC" id="5.6.1.7" evidence="1"/>
<dbReference type="EMBL" id="U17959">
    <property type="protein sequence ID" value="AAB39078.1"/>
    <property type="molecule type" value="Genomic_DNA"/>
</dbReference>
<dbReference type="SMR" id="Q50852"/>
<dbReference type="GO" id="GO:0005737">
    <property type="term" value="C:cytoplasm"/>
    <property type="evidence" value="ECO:0007669"/>
    <property type="project" value="UniProtKB-SubCell"/>
</dbReference>
<dbReference type="GO" id="GO:0005524">
    <property type="term" value="F:ATP binding"/>
    <property type="evidence" value="ECO:0007669"/>
    <property type="project" value="UniProtKB-KW"/>
</dbReference>
<dbReference type="GO" id="GO:0140662">
    <property type="term" value="F:ATP-dependent protein folding chaperone"/>
    <property type="evidence" value="ECO:0007669"/>
    <property type="project" value="InterPro"/>
</dbReference>
<dbReference type="GO" id="GO:0016853">
    <property type="term" value="F:isomerase activity"/>
    <property type="evidence" value="ECO:0007669"/>
    <property type="project" value="UniProtKB-KW"/>
</dbReference>
<dbReference type="GO" id="GO:0042026">
    <property type="term" value="P:protein refolding"/>
    <property type="evidence" value="ECO:0007669"/>
    <property type="project" value="InterPro"/>
</dbReference>
<dbReference type="Gene3D" id="1.10.560.10">
    <property type="entry name" value="GroEL-like equatorial domain"/>
    <property type="match status" value="1"/>
</dbReference>
<dbReference type="Gene3D" id="3.30.260.10">
    <property type="entry name" value="TCP-1-like chaperonin intermediate domain"/>
    <property type="match status" value="1"/>
</dbReference>
<dbReference type="InterPro" id="IPR001844">
    <property type="entry name" value="Cpn60/GroEL"/>
</dbReference>
<dbReference type="InterPro" id="IPR002423">
    <property type="entry name" value="Cpn60/GroEL/TCP-1"/>
</dbReference>
<dbReference type="InterPro" id="IPR027413">
    <property type="entry name" value="GROEL-like_equatorial_sf"/>
</dbReference>
<dbReference type="InterPro" id="IPR027410">
    <property type="entry name" value="TCP-1-like_intermed_sf"/>
</dbReference>
<dbReference type="PANTHER" id="PTHR45633">
    <property type="entry name" value="60 KDA HEAT SHOCK PROTEIN, MITOCHONDRIAL"/>
    <property type="match status" value="1"/>
</dbReference>
<dbReference type="Pfam" id="PF00118">
    <property type="entry name" value="Cpn60_TCP1"/>
    <property type="match status" value="1"/>
</dbReference>
<dbReference type="SUPFAM" id="SSF48592">
    <property type="entry name" value="GroEL equatorial domain-like"/>
    <property type="match status" value="1"/>
</dbReference>
<accession>Q50852</accession>
<reference key="1">
    <citation type="journal article" date="1995" name="Arch. Pathol. Lab. Med.">
        <title>Rapid Mycobacterium species assignment and unambiguous identification of mutations associated with antimicrobial resistance in Mycobacterium tuberculosis by automated DNA sequencing.</title>
        <authorList>
            <person name="Kapur V."/>
            <person name="Li L.L."/>
            <person name="Hamrick M.R."/>
            <person name="Plikaytis B.B."/>
            <person name="Shinnick T.M."/>
            <person name="Telenti A."/>
            <person name="Jacobs W.R. Jr."/>
            <person name="Banerjee A."/>
            <person name="Cole S."/>
            <person name="Yuen K.Y."/>
            <person name="Clarridge J.E."/>
            <person name="Kreiswirth B.N."/>
            <person name="Musser J.M."/>
        </authorList>
    </citation>
    <scope>NUCLEOTIDE SEQUENCE [GENOMIC DNA]</scope>
    <source>
        <strain>263</strain>
    </source>
</reference>
<organism>
    <name type="scientific">Mycobacterium xenopi</name>
    <dbReference type="NCBI Taxonomy" id="1789"/>
    <lineage>
        <taxon>Bacteria</taxon>
        <taxon>Bacillati</taxon>
        <taxon>Actinomycetota</taxon>
        <taxon>Actinomycetes</taxon>
        <taxon>Mycobacteriales</taxon>
        <taxon>Mycobacteriaceae</taxon>
        <taxon>Mycobacterium</taxon>
    </lineage>
</organism>
<evidence type="ECO:0000255" key="1">
    <source>
        <dbReference type="HAMAP-Rule" id="MF_00600"/>
    </source>
</evidence>
<evidence type="ECO:0000305" key="2"/>
<protein>
    <recommendedName>
        <fullName evidence="1">Chaperonin GroEL</fullName>
        <ecNumber evidence="1">5.6.1.7</ecNumber>
    </recommendedName>
    <alternativeName>
        <fullName evidence="1">60 kDa chaperonin</fullName>
    </alternativeName>
    <alternativeName>
        <fullName>65 kDa heat shock protein</fullName>
    </alternativeName>
    <alternativeName>
        <fullName evidence="1">Chaperonin-60</fullName>
        <shortName evidence="1">Cpn60</shortName>
    </alternativeName>
</protein>